<dbReference type="EC" id="3.6.5.3" evidence="2"/>
<dbReference type="EMBL" id="Z11874">
    <property type="protein sequence ID" value="CAA77904.1"/>
    <property type="molecule type" value="Genomic_DNA"/>
</dbReference>
<dbReference type="EMBL" id="X00044">
    <property type="protein sequence ID" value="CAA24925.1"/>
    <property type="molecule type" value="Genomic_DNA"/>
</dbReference>
<dbReference type="EMBL" id="X06254">
    <property type="protein sequence ID" value="CAA29599.1"/>
    <property type="molecule type" value="Genomic_DNA"/>
</dbReference>
<dbReference type="EMBL" id="X70810">
    <property type="protein sequence ID" value="CAA50087.1"/>
    <property type="molecule type" value="Genomic_DNA"/>
</dbReference>
<dbReference type="EMBL" id="X00480">
    <property type="protein sequence ID" value="CAA25159.1"/>
    <property type="molecule type" value="Genomic_DNA"/>
</dbReference>
<dbReference type="PIR" id="S34508">
    <property type="entry name" value="EFEGT"/>
</dbReference>
<dbReference type="RefSeq" id="NP_041900.1">
    <property type="nucleotide sequence ID" value="NC_001603.2"/>
</dbReference>
<dbReference type="SMR" id="P02991"/>
<dbReference type="iPTMnet" id="P02991"/>
<dbReference type="GeneID" id="807509"/>
<dbReference type="GO" id="GO:0009507">
    <property type="term" value="C:chloroplast"/>
    <property type="evidence" value="ECO:0007669"/>
    <property type="project" value="UniProtKB-SubCell"/>
</dbReference>
<dbReference type="GO" id="GO:0005739">
    <property type="term" value="C:mitochondrion"/>
    <property type="evidence" value="ECO:0007669"/>
    <property type="project" value="TreeGrafter"/>
</dbReference>
<dbReference type="GO" id="GO:0005525">
    <property type="term" value="F:GTP binding"/>
    <property type="evidence" value="ECO:0007669"/>
    <property type="project" value="UniProtKB-UniRule"/>
</dbReference>
<dbReference type="GO" id="GO:0003924">
    <property type="term" value="F:GTPase activity"/>
    <property type="evidence" value="ECO:0007669"/>
    <property type="project" value="InterPro"/>
</dbReference>
<dbReference type="GO" id="GO:0003746">
    <property type="term" value="F:translation elongation factor activity"/>
    <property type="evidence" value="ECO:0007669"/>
    <property type="project" value="UniProtKB-UniRule"/>
</dbReference>
<dbReference type="GO" id="GO:0070125">
    <property type="term" value="P:mitochondrial translational elongation"/>
    <property type="evidence" value="ECO:0007669"/>
    <property type="project" value="TreeGrafter"/>
</dbReference>
<dbReference type="CDD" id="cd01884">
    <property type="entry name" value="EF_Tu"/>
    <property type="match status" value="1"/>
</dbReference>
<dbReference type="CDD" id="cd03697">
    <property type="entry name" value="EFTU_II"/>
    <property type="match status" value="1"/>
</dbReference>
<dbReference type="CDD" id="cd03707">
    <property type="entry name" value="EFTU_III"/>
    <property type="match status" value="1"/>
</dbReference>
<dbReference type="FunFam" id="2.40.30.10:FF:000001">
    <property type="entry name" value="Elongation factor Tu"/>
    <property type="match status" value="1"/>
</dbReference>
<dbReference type="FunFam" id="2.40.30.10:FF:000046">
    <property type="entry name" value="Elongation factor Tu"/>
    <property type="match status" value="1"/>
</dbReference>
<dbReference type="FunFam" id="3.40.50.300:FF:000003">
    <property type="entry name" value="Elongation factor Tu"/>
    <property type="match status" value="1"/>
</dbReference>
<dbReference type="Gene3D" id="3.40.50.300">
    <property type="entry name" value="P-loop containing nucleotide triphosphate hydrolases"/>
    <property type="match status" value="1"/>
</dbReference>
<dbReference type="Gene3D" id="2.40.30.10">
    <property type="entry name" value="Translation factors"/>
    <property type="match status" value="2"/>
</dbReference>
<dbReference type="HAMAP" id="MF_00118_B">
    <property type="entry name" value="EF_Tu_B"/>
    <property type="match status" value="1"/>
</dbReference>
<dbReference type="InterPro" id="IPR041709">
    <property type="entry name" value="EF-Tu_GTP-bd"/>
</dbReference>
<dbReference type="InterPro" id="IPR050055">
    <property type="entry name" value="EF-Tu_GTPase"/>
</dbReference>
<dbReference type="InterPro" id="IPR004161">
    <property type="entry name" value="EFTu-like_2"/>
</dbReference>
<dbReference type="InterPro" id="IPR033720">
    <property type="entry name" value="EFTU_2"/>
</dbReference>
<dbReference type="InterPro" id="IPR031157">
    <property type="entry name" value="G_TR_CS"/>
</dbReference>
<dbReference type="InterPro" id="IPR027417">
    <property type="entry name" value="P-loop_NTPase"/>
</dbReference>
<dbReference type="InterPro" id="IPR005225">
    <property type="entry name" value="Small_GTP-bd"/>
</dbReference>
<dbReference type="InterPro" id="IPR000795">
    <property type="entry name" value="T_Tr_GTP-bd_dom"/>
</dbReference>
<dbReference type="InterPro" id="IPR009000">
    <property type="entry name" value="Transl_B-barrel_sf"/>
</dbReference>
<dbReference type="InterPro" id="IPR009001">
    <property type="entry name" value="Transl_elong_EF1A/Init_IF2_C"/>
</dbReference>
<dbReference type="InterPro" id="IPR004541">
    <property type="entry name" value="Transl_elong_EFTu/EF1A_bac/org"/>
</dbReference>
<dbReference type="InterPro" id="IPR004160">
    <property type="entry name" value="Transl_elong_EFTu/EF1A_C"/>
</dbReference>
<dbReference type="NCBIfam" id="TIGR00485">
    <property type="entry name" value="EF-Tu"/>
    <property type="match status" value="1"/>
</dbReference>
<dbReference type="NCBIfam" id="NF000766">
    <property type="entry name" value="PRK00049.1"/>
    <property type="match status" value="1"/>
</dbReference>
<dbReference type="NCBIfam" id="NF009372">
    <property type="entry name" value="PRK12735.1"/>
    <property type="match status" value="1"/>
</dbReference>
<dbReference type="NCBIfam" id="NF009373">
    <property type="entry name" value="PRK12736.1"/>
    <property type="match status" value="1"/>
</dbReference>
<dbReference type="NCBIfam" id="TIGR00231">
    <property type="entry name" value="small_GTP"/>
    <property type="match status" value="1"/>
</dbReference>
<dbReference type="PANTHER" id="PTHR43721:SF5">
    <property type="entry name" value="ELONGATION FACTOR TU, CHLOROPLASTIC"/>
    <property type="match status" value="1"/>
</dbReference>
<dbReference type="PANTHER" id="PTHR43721">
    <property type="entry name" value="ELONGATION FACTOR TU-RELATED"/>
    <property type="match status" value="1"/>
</dbReference>
<dbReference type="Pfam" id="PF00009">
    <property type="entry name" value="GTP_EFTU"/>
    <property type="match status" value="1"/>
</dbReference>
<dbReference type="Pfam" id="PF03144">
    <property type="entry name" value="GTP_EFTU_D2"/>
    <property type="match status" value="1"/>
</dbReference>
<dbReference type="Pfam" id="PF03143">
    <property type="entry name" value="GTP_EFTU_D3"/>
    <property type="match status" value="1"/>
</dbReference>
<dbReference type="PRINTS" id="PR00315">
    <property type="entry name" value="ELONGATNFCT"/>
</dbReference>
<dbReference type="SUPFAM" id="SSF50465">
    <property type="entry name" value="EF-Tu/eEF-1alpha/eIF2-gamma C-terminal domain"/>
    <property type="match status" value="1"/>
</dbReference>
<dbReference type="SUPFAM" id="SSF52540">
    <property type="entry name" value="P-loop containing nucleoside triphosphate hydrolases"/>
    <property type="match status" value="1"/>
</dbReference>
<dbReference type="SUPFAM" id="SSF50447">
    <property type="entry name" value="Translation proteins"/>
    <property type="match status" value="1"/>
</dbReference>
<dbReference type="PROSITE" id="PS00301">
    <property type="entry name" value="G_TR_1"/>
    <property type="match status" value="1"/>
</dbReference>
<dbReference type="PROSITE" id="PS51722">
    <property type="entry name" value="G_TR_2"/>
    <property type="match status" value="1"/>
</dbReference>
<name>EFTU_EUGGR</name>
<evidence type="ECO:0000250" key="1"/>
<evidence type="ECO:0000255" key="2">
    <source>
        <dbReference type="HAMAP-Rule" id="MF_00118"/>
    </source>
</evidence>
<evidence type="ECO:0000305" key="3"/>
<evidence type="ECO:0000305" key="4">
    <source>
    </source>
</evidence>
<geneLocation type="chloroplast"/>
<accession>P02991</accession>
<organism>
    <name type="scientific">Euglena gracilis</name>
    <dbReference type="NCBI Taxonomy" id="3039"/>
    <lineage>
        <taxon>Eukaryota</taxon>
        <taxon>Discoba</taxon>
        <taxon>Euglenozoa</taxon>
        <taxon>Euglenida</taxon>
        <taxon>Spirocuta</taxon>
        <taxon>Euglenophyceae</taxon>
        <taxon>Euglenales</taxon>
        <taxon>Euglenaceae</taxon>
        <taxon>Euglena</taxon>
    </lineage>
</organism>
<keyword id="KW-0150">Chloroplast</keyword>
<keyword id="KW-0251">Elongation factor</keyword>
<keyword id="KW-0342">GTP-binding</keyword>
<keyword id="KW-0378">Hydrolase</keyword>
<keyword id="KW-0460">Magnesium</keyword>
<keyword id="KW-0479">Metal-binding</keyword>
<keyword id="KW-0488">Methylation</keyword>
<keyword id="KW-0547">Nucleotide-binding</keyword>
<keyword id="KW-0934">Plastid</keyword>
<keyword id="KW-0648">Protein biosynthesis</keyword>
<gene>
    <name type="primary">tufA</name>
</gene>
<reference key="1">
    <citation type="journal article" date="1983" name="Nucleic Acids Res.">
        <title>Nucleotide sequence of a Euglena gracilis chloroplast genome region coding for the elongation factor Tu; evidence for a spliced mRNA.</title>
        <authorList>
            <person name="Montandon P.-E."/>
            <person name="Stutz E."/>
        </authorList>
    </citation>
    <scope>NUCLEOTIDE SEQUENCE [GENOMIC DNA]</scope>
    <source>
        <strain>Z / UTEX 753</strain>
    </source>
</reference>
<reference key="2">
    <citation type="journal article" date="1987" name="Nucleic Acids Res.">
        <title>Euglena gracilis chloroplast DNA: the untranslated leader of tufA-ORF206 gene contains an intron.</title>
        <authorList>
            <person name="Montandon P.-E."/>
            <person name="Knuchel-Aegerter C."/>
            <person name="Stutz E."/>
        </authorList>
    </citation>
    <scope>NUCLEOTIDE SEQUENCE [GENOMIC DNA]</scope>
    <source>
        <strain>Z / UTEX 753</strain>
    </source>
</reference>
<reference key="3">
    <citation type="journal article" date="1993" name="Nucleic Acids Res.">
        <title>Complete sequence of Euglena gracilis chloroplast DNA.</title>
        <authorList>
            <person name="Hallick R.B."/>
            <person name="Hong L."/>
            <person name="Drager R.G."/>
            <person name="Favreau M.R."/>
            <person name="Monfort A."/>
            <person name="Orsat B."/>
            <person name="Spielmann A."/>
            <person name="Stutz E."/>
        </authorList>
    </citation>
    <scope>NUCLEOTIDE SEQUENCE [LARGE SCALE GENOMIC DNA]</scope>
    <source>
        <strain>Z / UTEX 753</strain>
    </source>
</reference>
<reference key="4">
    <citation type="journal article" date="1984" name="Nucleic Acids Res.">
        <title>The genes for the ribosomal proteins S12 and S7 are clustered with the gene for the EF-Tu protein on the chloroplast genome of Euglena gracilis.</title>
        <authorList>
            <person name="Montandon P.-E."/>
            <person name="Stutz E."/>
        </authorList>
    </citation>
    <scope>NUCLEOTIDE SEQUENCE [GENOMIC DNA] OF 1-28</scope>
</reference>
<reference key="5">
    <citation type="journal article" date="1990" name="FEMS Microbiol. Lett.">
        <title>In vivo and in vitro methylation of the elongation factor EF-Tu from Euglena gracilis chloroplast.</title>
        <authorList>
            <person name="Toledo H."/>
            <person name="Jerez C.A."/>
        </authorList>
    </citation>
    <scope>METHYLATION AT LYS-57</scope>
</reference>
<feature type="chain" id="PRO_0000091458" description="Elongation factor Tu, chloroplastic">
    <location>
        <begin position="1"/>
        <end position="409"/>
    </location>
</feature>
<feature type="domain" description="tr-type G">
    <location>
        <begin position="10"/>
        <end position="214"/>
    </location>
</feature>
<feature type="region of interest" description="G1" evidence="1">
    <location>
        <begin position="19"/>
        <end position="26"/>
    </location>
</feature>
<feature type="region of interest" description="G2" evidence="1">
    <location>
        <begin position="60"/>
        <end position="64"/>
    </location>
</feature>
<feature type="region of interest" description="G3" evidence="1">
    <location>
        <begin position="81"/>
        <end position="84"/>
    </location>
</feature>
<feature type="region of interest" description="G4" evidence="1">
    <location>
        <begin position="136"/>
        <end position="139"/>
    </location>
</feature>
<feature type="region of interest" description="G5" evidence="1">
    <location>
        <begin position="174"/>
        <end position="176"/>
    </location>
</feature>
<feature type="binding site" evidence="1">
    <location>
        <begin position="19"/>
        <end position="26"/>
    </location>
    <ligand>
        <name>GTP</name>
        <dbReference type="ChEBI" id="CHEBI:37565"/>
    </ligand>
</feature>
<feature type="binding site" evidence="2">
    <location>
        <position position="26"/>
    </location>
    <ligand>
        <name>Mg(2+)</name>
        <dbReference type="ChEBI" id="CHEBI:18420"/>
    </ligand>
</feature>
<feature type="binding site" evidence="1">
    <location>
        <begin position="81"/>
        <end position="85"/>
    </location>
    <ligand>
        <name>GTP</name>
        <dbReference type="ChEBI" id="CHEBI:37565"/>
    </ligand>
</feature>
<feature type="binding site" evidence="1">
    <location>
        <begin position="136"/>
        <end position="139"/>
    </location>
    <ligand>
        <name>GTP</name>
        <dbReference type="ChEBI" id="CHEBI:37565"/>
    </ligand>
</feature>
<feature type="modified residue" description="N6-methyllysine" evidence="4">
    <location>
        <position position="57"/>
    </location>
</feature>
<protein>
    <recommendedName>
        <fullName>Elongation factor Tu, chloroplastic</fullName>
        <shortName>EF-Tu</shortName>
        <ecNumber evidence="2">3.6.5.3</ecNumber>
    </recommendedName>
</protein>
<sequence length="409" mass="45062">MARQKFERTKPHINIGTIGHVDHGKTTLTAAITMALAATGNSKAKRYEDIDSAPEEKARGITINTAHVEYETKNRHYAHVDCPGHADYVKNMITGAAQMDGAILVVSAADGPMPQTKEHILLAKQVGVPNIVVFLNKEDQVDDSELLELVELEIRETLSNYEFPGDDIPVIPGSALLSVEALTKNPKITKGENKWVDKILNLMDQVDSYIPTPTRDTEKDFLMAIEDVLSITGRGTVATGRVERGTIKVGETVELVGLKDTRSTTITGLEMFQKSLDEALAGDNVGVLLRGIQKNDVERGMVLAKPRTINPHTKFDSQVYILTKEEGGRHTPFFEGYRPQFYVRTTDVTGKIESFRSDNDNPAQMVMPGDRIKMKVELIQPIAIEKGMRFAIREGGRTVGAGVVLSIIQ</sequence>
<proteinExistence type="evidence at protein level"/>
<comment type="function">
    <text evidence="2">GTP hydrolase that promotes the GTP-dependent binding of aminoacyl-tRNA to the A-site of ribosomes during protein biosynthesis.</text>
</comment>
<comment type="catalytic activity">
    <reaction evidence="2">
        <text>GTP + H2O = GDP + phosphate + H(+)</text>
        <dbReference type="Rhea" id="RHEA:19669"/>
        <dbReference type="ChEBI" id="CHEBI:15377"/>
        <dbReference type="ChEBI" id="CHEBI:15378"/>
        <dbReference type="ChEBI" id="CHEBI:37565"/>
        <dbReference type="ChEBI" id="CHEBI:43474"/>
        <dbReference type="ChEBI" id="CHEBI:58189"/>
        <dbReference type="EC" id="3.6.5.3"/>
    </reaction>
    <physiologicalReaction direction="left-to-right" evidence="2">
        <dbReference type="Rhea" id="RHEA:19670"/>
    </physiologicalReaction>
</comment>
<comment type="subcellular location">
    <subcellularLocation>
        <location>Plastid</location>
        <location>Chloroplast</location>
    </subcellularLocation>
</comment>
<comment type="similarity">
    <text evidence="3">Belongs to the TRAFAC class translation factor GTPase superfamily. Classic translation factor GTPase family. EF-Tu/EF-1A subfamily.</text>
</comment>